<dbReference type="EC" id="3.1.26.4" evidence="1"/>
<dbReference type="EMBL" id="AP010918">
    <property type="protein sequence ID" value="BAH27196.1"/>
    <property type="molecule type" value="Genomic_DNA"/>
</dbReference>
<dbReference type="RefSeq" id="WP_003414713.1">
    <property type="nucleotide sequence ID" value="NZ_CP014566.1"/>
</dbReference>
<dbReference type="SMR" id="C1AG17"/>
<dbReference type="KEGG" id="mbt:JTY_2918"/>
<dbReference type="HOGENOM" id="CLU_036532_1_0_11"/>
<dbReference type="GO" id="GO:0005737">
    <property type="term" value="C:cytoplasm"/>
    <property type="evidence" value="ECO:0007669"/>
    <property type="project" value="UniProtKB-SubCell"/>
</dbReference>
<dbReference type="GO" id="GO:0032299">
    <property type="term" value="C:ribonuclease H2 complex"/>
    <property type="evidence" value="ECO:0007669"/>
    <property type="project" value="TreeGrafter"/>
</dbReference>
<dbReference type="GO" id="GO:0030145">
    <property type="term" value="F:manganese ion binding"/>
    <property type="evidence" value="ECO:0007669"/>
    <property type="project" value="UniProtKB-UniRule"/>
</dbReference>
<dbReference type="GO" id="GO:0003723">
    <property type="term" value="F:RNA binding"/>
    <property type="evidence" value="ECO:0007669"/>
    <property type="project" value="InterPro"/>
</dbReference>
<dbReference type="GO" id="GO:0004523">
    <property type="term" value="F:RNA-DNA hybrid ribonuclease activity"/>
    <property type="evidence" value="ECO:0007669"/>
    <property type="project" value="UniProtKB-UniRule"/>
</dbReference>
<dbReference type="GO" id="GO:0043137">
    <property type="term" value="P:DNA replication, removal of RNA primer"/>
    <property type="evidence" value="ECO:0007669"/>
    <property type="project" value="TreeGrafter"/>
</dbReference>
<dbReference type="GO" id="GO:0006298">
    <property type="term" value="P:mismatch repair"/>
    <property type="evidence" value="ECO:0007669"/>
    <property type="project" value="TreeGrafter"/>
</dbReference>
<dbReference type="CDD" id="cd07182">
    <property type="entry name" value="RNase_HII_bacteria_HII_like"/>
    <property type="match status" value="1"/>
</dbReference>
<dbReference type="FunFam" id="3.30.420.10:FF:000113">
    <property type="entry name" value="Ribonuclease HII"/>
    <property type="match status" value="1"/>
</dbReference>
<dbReference type="Gene3D" id="3.30.420.10">
    <property type="entry name" value="Ribonuclease H-like superfamily/Ribonuclease H"/>
    <property type="match status" value="1"/>
</dbReference>
<dbReference type="HAMAP" id="MF_00052_B">
    <property type="entry name" value="RNase_HII_B"/>
    <property type="match status" value="1"/>
</dbReference>
<dbReference type="InterPro" id="IPR022898">
    <property type="entry name" value="RNase_HII"/>
</dbReference>
<dbReference type="InterPro" id="IPR001352">
    <property type="entry name" value="RNase_HII/HIII"/>
</dbReference>
<dbReference type="InterPro" id="IPR024567">
    <property type="entry name" value="RNase_HII/HIII_dom"/>
</dbReference>
<dbReference type="InterPro" id="IPR012337">
    <property type="entry name" value="RNaseH-like_sf"/>
</dbReference>
<dbReference type="InterPro" id="IPR036397">
    <property type="entry name" value="RNaseH_sf"/>
</dbReference>
<dbReference type="NCBIfam" id="NF000595">
    <property type="entry name" value="PRK00015.1-3"/>
    <property type="match status" value="1"/>
</dbReference>
<dbReference type="NCBIfam" id="NF000598">
    <property type="entry name" value="PRK00015.2-2"/>
    <property type="match status" value="1"/>
</dbReference>
<dbReference type="NCBIfam" id="NF000600">
    <property type="entry name" value="PRK00015.2-4"/>
    <property type="match status" value="1"/>
</dbReference>
<dbReference type="PANTHER" id="PTHR10954">
    <property type="entry name" value="RIBONUCLEASE H2 SUBUNIT A"/>
    <property type="match status" value="1"/>
</dbReference>
<dbReference type="PANTHER" id="PTHR10954:SF18">
    <property type="entry name" value="RIBONUCLEASE HII"/>
    <property type="match status" value="1"/>
</dbReference>
<dbReference type="Pfam" id="PF01351">
    <property type="entry name" value="RNase_HII"/>
    <property type="match status" value="1"/>
</dbReference>
<dbReference type="SUPFAM" id="SSF53098">
    <property type="entry name" value="Ribonuclease H-like"/>
    <property type="match status" value="1"/>
</dbReference>
<dbReference type="PROSITE" id="PS51975">
    <property type="entry name" value="RNASE_H_2"/>
    <property type="match status" value="1"/>
</dbReference>
<name>RNH2_MYCBT</name>
<reference key="1">
    <citation type="journal article" date="2009" name="Vaccine">
        <title>Whole genome sequence analysis of Mycobacterium bovis bacillus Calmette-Guerin (BCG) Tokyo 172: a comparative study of BCG vaccine substrains.</title>
        <authorList>
            <person name="Seki M."/>
            <person name="Honda I."/>
            <person name="Fujita I."/>
            <person name="Yano I."/>
            <person name="Yamamoto S."/>
            <person name="Koyama A."/>
        </authorList>
    </citation>
    <scope>NUCLEOTIDE SEQUENCE [LARGE SCALE GENOMIC DNA]</scope>
    <source>
        <strain>BCG / Tokyo 172 / ATCC 35737 / TMC 1019</strain>
    </source>
</reference>
<accession>C1AG17</accession>
<feature type="chain" id="PRO_1000194457" description="Ribonuclease HII">
    <location>
        <begin position="1"/>
        <end position="264"/>
    </location>
</feature>
<feature type="domain" description="RNase H type-2" evidence="2">
    <location>
        <begin position="33"/>
        <end position="224"/>
    </location>
</feature>
<feature type="region of interest" description="Disordered" evidence="3">
    <location>
        <begin position="222"/>
        <end position="264"/>
    </location>
</feature>
<feature type="binding site" evidence="1">
    <location>
        <position position="39"/>
    </location>
    <ligand>
        <name>a divalent metal cation</name>
        <dbReference type="ChEBI" id="CHEBI:60240"/>
    </ligand>
</feature>
<feature type="binding site" evidence="1">
    <location>
        <position position="40"/>
    </location>
    <ligand>
        <name>a divalent metal cation</name>
        <dbReference type="ChEBI" id="CHEBI:60240"/>
    </ligand>
</feature>
<feature type="binding site" evidence="1">
    <location>
        <position position="133"/>
    </location>
    <ligand>
        <name>a divalent metal cation</name>
        <dbReference type="ChEBI" id="CHEBI:60240"/>
    </ligand>
</feature>
<protein>
    <recommendedName>
        <fullName evidence="1">Ribonuclease HII</fullName>
        <shortName evidence="1">RNase HII</shortName>
        <ecNumber evidence="1">3.1.26.4</ecNumber>
    </recommendedName>
</protein>
<sequence>MTKTWPPRTVIRKSGGLRGMRTLESALHRGGLGPVAGVDEVGRGACAGPLVVAACVLGPGRIASLAALDDSKKLSEQAREKLFPLICRYAVAYHVVFIPSAEVDRRGVHVANIEGMRRAVAGLAVRPGYVLSDGFRVPGLPMPSLPVIGGDAAAACIAAASVLAKVSRDRVMVALDADHPGYGFAEHKGYSTPAHSRALARLGPCPQHRYSFINVRRVASGSNTAEVADGQPDPRDGTAQTGEGRWSKSSHPATMRATGRAQGT</sequence>
<comment type="function">
    <text evidence="1">Endonuclease that specifically degrades the RNA of RNA-DNA hybrids.</text>
</comment>
<comment type="catalytic activity">
    <reaction evidence="1">
        <text>Endonucleolytic cleavage to 5'-phosphomonoester.</text>
        <dbReference type="EC" id="3.1.26.4"/>
    </reaction>
</comment>
<comment type="cofactor">
    <cofactor evidence="1">
        <name>Mn(2+)</name>
        <dbReference type="ChEBI" id="CHEBI:29035"/>
    </cofactor>
    <cofactor evidence="1">
        <name>Mg(2+)</name>
        <dbReference type="ChEBI" id="CHEBI:18420"/>
    </cofactor>
    <text evidence="1">Manganese or magnesium. Binds 1 divalent metal ion per monomer in the absence of substrate. May bind a second metal ion after substrate binding.</text>
</comment>
<comment type="subcellular location">
    <subcellularLocation>
        <location evidence="1">Cytoplasm</location>
    </subcellularLocation>
</comment>
<comment type="similarity">
    <text evidence="1">Belongs to the RNase HII family.</text>
</comment>
<evidence type="ECO:0000255" key="1">
    <source>
        <dbReference type="HAMAP-Rule" id="MF_00052"/>
    </source>
</evidence>
<evidence type="ECO:0000255" key="2">
    <source>
        <dbReference type="PROSITE-ProRule" id="PRU01319"/>
    </source>
</evidence>
<evidence type="ECO:0000256" key="3">
    <source>
        <dbReference type="SAM" id="MobiDB-lite"/>
    </source>
</evidence>
<organism>
    <name type="scientific">Mycobacterium bovis (strain BCG / Tokyo 172 / ATCC 35737 / TMC 1019)</name>
    <dbReference type="NCBI Taxonomy" id="561275"/>
    <lineage>
        <taxon>Bacteria</taxon>
        <taxon>Bacillati</taxon>
        <taxon>Actinomycetota</taxon>
        <taxon>Actinomycetes</taxon>
        <taxon>Mycobacteriales</taxon>
        <taxon>Mycobacteriaceae</taxon>
        <taxon>Mycobacterium</taxon>
        <taxon>Mycobacterium tuberculosis complex</taxon>
    </lineage>
</organism>
<gene>
    <name evidence="1" type="primary">rnhB</name>
    <name type="ordered locus">JTY_2918</name>
</gene>
<proteinExistence type="inferred from homology"/>
<keyword id="KW-0963">Cytoplasm</keyword>
<keyword id="KW-0255">Endonuclease</keyword>
<keyword id="KW-0378">Hydrolase</keyword>
<keyword id="KW-0464">Manganese</keyword>
<keyword id="KW-0479">Metal-binding</keyword>
<keyword id="KW-0540">Nuclease</keyword>